<dbReference type="EC" id="4.1.1.48" evidence="1"/>
<dbReference type="EMBL" id="CP000792">
    <property type="protein sequence ID" value="ABW74781.1"/>
    <property type="molecule type" value="Genomic_DNA"/>
</dbReference>
<dbReference type="RefSeq" id="WP_048809803.1">
    <property type="nucleotide sequence ID" value="NC_009802.2"/>
</dbReference>
<dbReference type="SMR" id="A8Z6K1"/>
<dbReference type="STRING" id="360104.CCC13826_0144"/>
<dbReference type="KEGG" id="cco:CCC13826_0144"/>
<dbReference type="eggNOG" id="COG0134">
    <property type="taxonomic scope" value="Bacteria"/>
</dbReference>
<dbReference type="HOGENOM" id="CLU_034247_2_0_7"/>
<dbReference type="OrthoDB" id="9804217at2"/>
<dbReference type="UniPathway" id="UPA00035">
    <property type="reaction ID" value="UER00043"/>
</dbReference>
<dbReference type="Proteomes" id="UP000001121">
    <property type="component" value="Chromosome"/>
</dbReference>
<dbReference type="GO" id="GO:0004425">
    <property type="term" value="F:indole-3-glycerol-phosphate synthase activity"/>
    <property type="evidence" value="ECO:0007669"/>
    <property type="project" value="UniProtKB-UniRule"/>
</dbReference>
<dbReference type="GO" id="GO:0004640">
    <property type="term" value="F:phosphoribosylanthranilate isomerase activity"/>
    <property type="evidence" value="ECO:0007669"/>
    <property type="project" value="TreeGrafter"/>
</dbReference>
<dbReference type="GO" id="GO:0000162">
    <property type="term" value="P:L-tryptophan biosynthetic process"/>
    <property type="evidence" value="ECO:0007669"/>
    <property type="project" value="UniProtKB-UniRule"/>
</dbReference>
<dbReference type="CDD" id="cd00331">
    <property type="entry name" value="IGPS"/>
    <property type="match status" value="1"/>
</dbReference>
<dbReference type="FunFam" id="3.20.20.70:FF:000024">
    <property type="entry name" value="Indole-3-glycerol phosphate synthase"/>
    <property type="match status" value="1"/>
</dbReference>
<dbReference type="Gene3D" id="3.20.20.70">
    <property type="entry name" value="Aldolase class I"/>
    <property type="match status" value="1"/>
</dbReference>
<dbReference type="HAMAP" id="MF_00134_B">
    <property type="entry name" value="IGPS_B"/>
    <property type="match status" value="1"/>
</dbReference>
<dbReference type="InterPro" id="IPR013785">
    <property type="entry name" value="Aldolase_TIM"/>
</dbReference>
<dbReference type="InterPro" id="IPR045186">
    <property type="entry name" value="Indole-3-glycerol_P_synth"/>
</dbReference>
<dbReference type="InterPro" id="IPR013798">
    <property type="entry name" value="Indole-3-glycerol_P_synth_dom"/>
</dbReference>
<dbReference type="InterPro" id="IPR001468">
    <property type="entry name" value="Indole-3-GlycerolPSynthase_CS"/>
</dbReference>
<dbReference type="InterPro" id="IPR011060">
    <property type="entry name" value="RibuloseP-bd_barrel"/>
</dbReference>
<dbReference type="NCBIfam" id="NF001377">
    <property type="entry name" value="PRK00278.2-4"/>
    <property type="match status" value="1"/>
</dbReference>
<dbReference type="NCBIfam" id="NF001378">
    <property type="entry name" value="PRK00278.2-5"/>
    <property type="match status" value="1"/>
</dbReference>
<dbReference type="PANTHER" id="PTHR22854:SF2">
    <property type="entry name" value="INDOLE-3-GLYCEROL-PHOSPHATE SYNTHASE"/>
    <property type="match status" value="1"/>
</dbReference>
<dbReference type="PANTHER" id="PTHR22854">
    <property type="entry name" value="TRYPTOPHAN BIOSYNTHESIS PROTEIN"/>
    <property type="match status" value="1"/>
</dbReference>
<dbReference type="Pfam" id="PF00218">
    <property type="entry name" value="IGPS"/>
    <property type="match status" value="1"/>
</dbReference>
<dbReference type="SUPFAM" id="SSF51366">
    <property type="entry name" value="Ribulose-phoshate binding barrel"/>
    <property type="match status" value="1"/>
</dbReference>
<dbReference type="PROSITE" id="PS00614">
    <property type="entry name" value="IGPS"/>
    <property type="match status" value="1"/>
</dbReference>
<evidence type="ECO:0000255" key="1">
    <source>
        <dbReference type="HAMAP-Rule" id="MF_00134"/>
    </source>
</evidence>
<reference key="1">
    <citation type="submission" date="2007-10" db="EMBL/GenBank/DDBJ databases">
        <title>Genome sequence of Campylobacter concisus 13826 isolated from human feces.</title>
        <authorList>
            <person name="Fouts D.E."/>
            <person name="Mongodin E.F."/>
            <person name="Puiu D."/>
            <person name="Sebastian Y."/>
            <person name="Miller W.G."/>
            <person name="Mandrell R.E."/>
            <person name="On S."/>
            <person name="Nelson K.E."/>
        </authorList>
    </citation>
    <scope>NUCLEOTIDE SEQUENCE [LARGE SCALE GENOMIC DNA]</scope>
    <source>
        <strain>13826</strain>
    </source>
</reference>
<keyword id="KW-0028">Amino-acid biosynthesis</keyword>
<keyword id="KW-0057">Aromatic amino acid biosynthesis</keyword>
<keyword id="KW-0210">Decarboxylase</keyword>
<keyword id="KW-0456">Lyase</keyword>
<keyword id="KW-0822">Tryptophan biosynthesis</keyword>
<sequence>MILDEIIKKTKEDLKKRKADYPQEWLGRSLAYNPYVPRDVLGALRASKSEPIKIIAEIKKASPSKGMIREDFEPIKIAQEYEQYANAFSILTEPHWFKGNIEYITQVRRYASRPILRKDFIVDKYQILEALVYGADFILLIAKALTQGELKELLEYAHHLGLEVLVETHDASDVKKAVFAGANIIGINHRNLDDFTMDMGLCEKLVPLLPNGKIIVAESGLYEYEQLRELSKIGVDAFLIGEHFMRQDDIKSAVKKIKEGE</sequence>
<organism>
    <name type="scientific">Campylobacter concisus (strain 13826)</name>
    <dbReference type="NCBI Taxonomy" id="360104"/>
    <lineage>
        <taxon>Bacteria</taxon>
        <taxon>Pseudomonadati</taxon>
        <taxon>Campylobacterota</taxon>
        <taxon>Epsilonproteobacteria</taxon>
        <taxon>Campylobacterales</taxon>
        <taxon>Campylobacteraceae</taxon>
        <taxon>Campylobacter</taxon>
    </lineage>
</organism>
<gene>
    <name evidence="1" type="primary">trpC</name>
    <name type="ordered locus">Ccon26_08630</name>
    <name type="ORF">CCC13826_0144</name>
</gene>
<feature type="chain" id="PRO_1000071432" description="Indole-3-glycerol phosphate synthase">
    <location>
        <begin position="1"/>
        <end position="261"/>
    </location>
</feature>
<protein>
    <recommendedName>
        <fullName evidence="1">Indole-3-glycerol phosphate synthase</fullName>
        <shortName evidence="1">IGPS</shortName>
        <ecNumber evidence="1">4.1.1.48</ecNumber>
    </recommendedName>
</protein>
<proteinExistence type="inferred from homology"/>
<name>TRPC_CAMC1</name>
<accession>A8Z6K1</accession>
<comment type="catalytic activity">
    <reaction evidence="1">
        <text>1-(2-carboxyphenylamino)-1-deoxy-D-ribulose 5-phosphate + H(+) = (1S,2R)-1-C-(indol-3-yl)glycerol 3-phosphate + CO2 + H2O</text>
        <dbReference type="Rhea" id="RHEA:23476"/>
        <dbReference type="ChEBI" id="CHEBI:15377"/>
        <dbReference type="ChEBI" id="CHEBI:15378"/>
        <dbReference type="ChEBI" id="CHEBI:16526"/>
        <dbReference type="ChEBI" id="CHEBI:58613"/>
        <dbReference type="ChEBI" id="CHEBI:58866"/>
        <dbReference type="EC" id="4.1.1.48"/>
    </reaction>
</comment>
<comment type="pathway">
    <text evidence="1">Amino-acid biosynthesis; L-tryptophan biosynthesis; L-tryptophan from chorismate: step 4/5.</text>
</comment>
<comment type="similarity">
    <text evidence="1">Belongs to the TrpC family.</text>
</comment>